<dbReference type="EMBL" id="BA000023">
    <property type="protein sequence ID" value="BAB65311.1"/>
    <property type="molecule type" value="Genomic_DNA"/>
</dbReference>
<dbReference type="RefSeq" id="WP_010978294.1">
    <property type="nucleotide sequence ID" value="NC_003106.2"/>
</dbReference>
<dbReference type="SMR" id="Q975T8"/>
<dbReference type="STRING" id="273063.STK_03340"/>
<dbReference type="GeneID" id="1458248"/>
<dbReference type="KEGG" id="sto:STK_03340"/>
<dbReference type="PATRIC" id="fig|273063.9.peg.390"/>
<dbReference type="eggNOG" id="arCOG04270">
    <property type="taxonomic scope" value="Archaea"/>
</dbReference>
<dbReference type="OrthoDB" id="5935at2157"/>
<dbReference type="Proteomes" id="UP000001015">
    <property type="component" value="Chromosome"/>
</dbReference>
<dbReference type="GO" id="GO:0003677">
    <property type="term" value="F:DNA binding"/>
    <property type="evidence" value="ECO:0007669"/>
    <property type="project" value="UniProtKB-KW"/>
</dbReference>
<dbReference type="GO" id="GO:0006355">
    <property type="term" value="P:regulation of DNA-templated transcription"/>
    <property type="evidence" value="ECO:0007669"/>
    <property type="project" value="InterPro"/>
</dbReference>
<dbReference type="GO" id="GO:0006367">
    <property type="term" value="P:transcription initiation at RNA polymerase II promoter"/>
    <property type="evidence" value="ECO:0007669"/>
    <property type="project" value="InterPro"/>
</dbReference>
<dbReference type="Gene3D" id="1.10.10.10">
    <property type="entry name" value="Winged helix-like DNA-binding domain superfamily/Winged helix DNA-binding domain"/>
    <property type="match status" value="1"/>
</dbReference>
<dbReference type="HAMAP" id="MF_01909">
    <property type="entry name" value="TFE_arch"/>
    <property type="match status" value="1"/>
</dbReference>
<dbReference type="InterPro" id="IPR016481">
    <property type="entry name" value="TF_E_archaea"/>
</dbReference>
<dbReference type="InterPro" id="IPR039997">
    <property type="entry name" value="TFE"/>
</dbReference>
<dbReference type="InterPro" id="IPR017919">
    <property type="entry name" value="TFIIE/TFIIEa_HTH"/>
</dbReference>
<dbReference type="InterPro" id="IPR002853">
    <property type="entry name" value="TFIIE_asu"/>
</dbReference>
<dbReference type="InterPro" id="IPR024550">
    <property type="entry name" value="TFIIEa/SarR/Rpc3_HTH_dom"/>
</dbReference>
<dbReference type="InterPro" id="IPR036388">
    <property type="entry name" value="WH-like_DNA-bd_sf"/>
</dbReference>
<dbReference type="InterPro" id="IPR036390">
    <property type="entry name" value="WH_DNA-bd_sf"/>
</dbReference>
<dbReference type="PANTHER" id="PTHR13097:SF7">
    <property type="entry name" value="GENERAL TRANSCRIPTION FACTOR IIE SUBUNIT 1"/>
    <property type="match status" value="1"/>
</dbReference>
<dbReference type="PANTHER" id="PTHR13097">
    <property type="entry name" value="TRANSCRIPTION INITIATION FACTOR IIE, ALPHA SUBUNIT"/>
    <property type="match status" value="1"/>
</dbReference>
<dbReference type="Pfam" id="PF02002">
    <property type="entry name" value="TFIIE_alpha"/>
    <property type="match status" value="1"/>
</dbReference>
<dbReference type="PIRSF" id="PIRSF006373">
    <property type="entry name" value="TF_E_archaea"/>
    <property type="match status" value="1"/>
</dbReference>
<dbReference type="SMART" id="SM00531">
    <property type="entry name" value="TFIIE"/>
    <property type="match status" value="1"/>
</dbReference>
<dbReference type="SUPFAM" id="SSF46785">
    <property type="entry name" value="Winged helix' DNA-binding domain"/>
    <property type="match status" value="1"/>
</dbReference>
<dbReference type="PROSITE" id="PS51344">
    <property type="entry name" value="HTH_TFE_IIE"/>
    <property type="match status" value="1"/>
</dbReference>
<gene>
    <name evidence="1" type="primary">tfe</name>
    <name type="ordered locus">STK_03340</name>
</gene>
<feature type="chain" id="PRO_0000326624" description="Transcription factor E">
    <location>
        <begin position="1"/>
        <end position="178"/>
    </location>
</feature>
<feature type="domain" description="HTH TFE/IIEalpha-type" evidence="1">
    <location>
        <begin position="5"/>
        <end position="89"/>
    </location>
</feature>
<keyword id="KW-0238">DNA-binding</keyword>
<keyword id="KW-1185">Reference proteome</keyword>
<keyword id="KW-0804">Transcription</keyword>
<keyword id="KW-0805">Transcription regulation</keyword>
<accession>Q975T8</accession>
<proteinExistence type="inferred from homology"/>
<organism>
    <name type="scientific">Sulfurisphaera tokodaii (strain DSM 16993 / JCM 10545 / NBRC 100140 / 7)</name>
    <name type="common">Sulfolobus tokodaii</name>
    <dbReference type="NCBI Taxonomy" id="273063"/>
    <lineage>
        <taxon>Archaea</taxon>
        <taxon>Thermoproteota</taxon>
        <taxon>Thermoprotei</taxon>
        <taxon>Sulfolobales</taxon>
        <taxon>Sulfolobaceae</taxon>
        <taxon>Sulfurisphaera</taxon>
    </lineage>
</organism>
<protein>
    <recommendedName>
        <fullName evidence="1">Transcription factor E</fullName>
        <shortName evidence="1">TFE</shortName>
    </recommendedName>
    <alternativeName>
        <fullName evidence="1">TFIIE subunit alpha homolog</fullName>
    </alternativeName>
    <alternativeName>
        <fullName evidence="1">Transcription initiation factor TFIIE</fullName>
    </alternativeName>
</protein>
<comment type="function">
    <text evidence="1">Transcription factor that plays a role in the activation of archaeal genes transcribed by RNA polymerase. Facilitates transcription initiation by enhancing TATA-box recognition by TATA-box-binding protein (Tbp), and transcription factor B (Tfb) and RNA polymerase recruitment. Not absolutely required for transcription in vitro, but particularly important in cases where Tbp or Tfb function is not optimal. It dynamically alters the nucleic acid-binding properties of RNA polymerases by stabilizing the initiation complex and destabilizing elongation complexes. Seems to translocate with the RNA polymerase following initiation and acts by binding to the non template strand of the transcription bubble in elongation complexes.</text>
</comment>
<comment type="subunit">
    <text evidence="1">Monomer. Interaction with RNA polymerase subunits RpoF and RpoE is necessary for Tfe stimulatory transcription activity. Able to interact with Tbp and RNA polymerase in the absence of DNA promoter. Interacts both with the preinitiation and elongation complexes.</text>
</comment>
<comment type="domain">
    <text evidence="1">The winged helix domain is involved in binding to DNA in the preinitiation complex.</text>
</comment>
<comment type="similarity">
    <text evidence="1">Belongs to the TFE family.</text>
</comment>
<reference key="1">
    <citation type="journal article" date="2001" name="DNA Res.">
        <title>Complete genome sequence of an aerobic thermoacidophilic Crenarchaeon, Sulfolobus tokodaii strain7.</title>
        <authorList>
            <person name="Kawarabayasi Y."/>
            <person name="Hino Y."/>
            <person name="Horikawa H."/>
            <person name="Jin-no K."/>
            <person name="Takahashi M."/>
            <person name="Sekine M."/>
            <person name="Baba S."/>
            <person name="Ankai A."/>
            <person name="Kosugi H."/>
            <person name="Hosoyama A."/>
            <person name="Fukui S."/>
            <person name="Nagai Y."/>
            <person name="Nishijima K."/>
            <person name="Otsuka R."/>
            <person name="Nakazawa H."/>
            <person name="Takamiya M."/>
            <person name="Kato Y."/>
            <person name="Yoshizawa T."/>
            <person name="Tanaka T."/>
            <person name="Kudoh Y."/>
            <person name="Yamazaki J."/>
            <person name="Kushida N."/>
            <person name="Oguchi A."/>
            <person name="Aoki K."/>
            <person name="Masuda S."/>
            <person name="Yanagii M."/>
            <person name="Nishimura M."/>
            <person name="Yamagishi A."/>
            <person name="Oshima T."/>
            <person name="Kikuchi H."/>
        </authorList>
    </citation>
    <scope>NUCLEOTIDE SEQUENCE [LARGE SCALE GENOMIC DNA]</scope>
    <source>
        <strain>DSM 16993 / JCM 10545 / NBRC 100140 / 7</strain>
    </source>
</reference>
<sequence>MSSRAEELILSLAKDLVGEDATELLKFLLRKRIEMTDDDIAKELNVKVNEIRKKLYLLSEQGFITYRKTRDKETGLFIYYWKVNIDQINELLLNRKRLVLEKLKARYEQEKDSLYYYCPQDNIQYNFDEALENEFKCPKCGSPLEYYDSEKTKKFLEYKIKQIENEIERETRHGSNSR</sequence>
<name>TFE_SULTO</name>
<evidence type="ECO:0000255" key="1">
    <source>
        <dbReference type="HAMAP-Rule" id="MF_01909"/>
    </source>
</evidence>